<organism>
    <name type="scientific">Friend murine leukemia virus (isolate PVC-211)</name>
    <name type="common">FrMLV</name>
    <dbReference type="NCBI Taxonomy" id="11798"/>
    <lineage>
        <taxon>Viruses</taxon>
        <taxon>Riboviria</taxon>
        <taxon>Pararnavirae</taxon>
        <taxon>Artverviricota</taxon>
        <taxon>Revtraviricetes</taxon>
        <taxon>Ortervirales</taxon>
        <taxon>Retroviridae</taxon>
        <taxon>Orthoretrovirinae</taxon>
        <taxon>Gammaretrovirus</taxon>
        <taxon>Murine leukemia virus</taxon>
    </lineage>
</organism>
<feature type="initiator methionine" description="Removed" evidence="5">
    <location>
        <position position="1"/>
    </location>
</feature>
<feature type="chain" id="PRO_0000259731" description="Gag-Pol polyprotein">
    <location>
        <begin position="2"/>
        <end position="1738"/>
    </location>
</feature>
<feature type="chain" id="PRO_0000442899" description="Matrix protein p15">
    <location>
        <begin position="2"/>
        <end position="131"/>
    </location>
</feature>
<feature type="chain" id="PRO_0000442900" description="RNA-binding phosphoprotein p12">
    <location>
        <begin position="132"/>
        <end position="215"/>
    </location>
</feature>
<feature type="chain" id="PRO_0000442901" description="Capsid protein p30">
    <location>
        <begin position="216"/>
        <end position="478"/>
    </location>
</feature>
<feature type="chain" id="PRO_0000442902" description="Nucleocapsid protein p10-Pol">
    <location>
        <begin position="479"/>
        <end position="534"/>
    </location>
</feature>
<feature type="chain" id="PRO_0000026132" description="Protease">
    <location>
        <begin position="535"/>
        <end position="659"/>
    </location>
</feature>
<feature type="chain" id="PRO_0000259732" description="Reverse transcriptase/ribonuclease H">
    <location>
        <begin position="660"/>
        <end position="1330"/>
    </location>
</feature>
<feature type="chain" id="PRO_0000259733" description="Integrase">
    <location>
        <begin position="1331"/>
        <end position="1738"/>
    </location>
</feature>
<feature type="domain" description="Peptidase A2" evidence="7">
    <location>
        <begin position="561"/>
        <end position="631"/>
    </location>
</feature>
<feature type="domain" description="Reverse transcriptase" evidence="8">
    <location>
        <begin position="741"/>
        <end position="932"/>
    </location>
</feature>
<feature type="domain" description="RNase H type-1" evidence="9">
    <location>
        <begin position="1174"/>
        <end position="1320"/>
    </location>
</feature>
<feature type="domain" description="Integrase catalytic" evidence="10">
    <location>
        <begin position="1444"/>
        <end position="1602"/>
    </location>
</feature>
<feature type="zinc finger region" description="CCHC-type" evidence="6">
    <location>
        <begin position="502"/>
        <end position="519"/>
    </location>
</feature>
<feature type="zinc finger region" description="HHCC-type" evidence="3">
    <location>
        <begin position="1387"/>
        <end position="1427"/>
    </location>
</feature>
<feature type="region of interest" description="Disordered" evidence="11">
    <location>
        <begin position="111"/>
        <end position="218"/>
    </location>
</feature>
<feature type="region of interest" description="Interaction with host PIAS4" evidence="1">
    <location>
        <begin position="345"/>
        <end position="393"/>
    </location>
</feature>
<feature type="region of interest" description="Interaction with host UBE2I" evidence="1">
    <location>
        <begin position="430"/>
        <end position="435"/>
    </location>
</feature>
<feature type="region of interest" description="Disordered" evidence="11">
    <location>
        <begin position="434"/>
        <end position="499"/>
    </location>
</feature>
<feature type="region of interest" description="Disordered" evidence="11">
    <location>
        <begin position="513"/>
        <end position="552"/>
    </location>
</feature>
<feature type="coiled-coil region" evidence="5">
    <location>
        <begin position="438"/>
        <end position="478"/>
    </location>
</feature>
<feature type="short sequence motif" description="PTAP/PSAP motif" evidence="1">
    <location>
        <begin position="111"/>
        <end position="114"/>
    </location>
</feature>
<feature type="short sequence motif" description="LYPX(n)L motif" evidence="1">
    <location>
        <begin position="130"/>
        <end position="134"/>
    </location>
</feature>
<feature type="short sequence motif" description="PPXY motif" evidence="1">
    <location>
        <begin position="162"/>
        <end position="165"/>
    </location>
</feature>
<feature type="compositionally biased region" description="Pro residues" evidence="11">
    <location>
        <begin position="111"/>
        <end position="124"/>
    </location>
</feature>
<feature type="compositionally biased region" description="Pro residues" evidence="11">
    <location>
        <begin position="161"/>
        <end position="173"/>
    </location>
</feature>
<feature type="compositionally biased region" description="Basic and acidic residues" evidence="11">
    <location>
        <begin position="434"/>
        <end position="466"/>
    </location>
</feature>
<feature type="compositionally biased region" description="Basic and acidic residues" evidence="11">
    <location>
        <begin position="486"/>
        <end position="499"/>
    </location>
</feature>
<feature type="active site" description="Protease; shared with dimeric partner" evidence="7">
    <location>
        <position position="566"/>
    </location>
</feature>
<feature type="binding site" evidence="8">
    <location>
        <position position="809"/>
    </location>
    <ligand>
        <name>Mg(2+)</name>
        <dbReference type="ChEBI" id="CHEBI:18420"/>
        <label>1</label>
        <note>catalytic; for reverse transcriptase activity</note>
    </ligand>
</feature>
<feature type="binding site" evidence="8">
    <location>
        <position position="883"/>
    </location>
    <ligand>
        <name>Mg(2+)</name>
        <dbReference type="ChEBI" id="CHEBI:18420"/>
        <label>1</label>
        <note>catalytic; for reverse transcriptase activity</note>
    </ligand>
</feature>
<feature type="binding site" evidence="8">
    <location>
        <position position="884"/>
    </location>
    <ligand>
        <name>Mg(2+)</name>
        <dbReference type="ChEBI" id="CHEBI:18420"/>
        <label>1</label>
        <note>catalytic; for reverse transcriptase activity</note>
    </ligand>
</feature>
<feature type="binding site" evidence="9">
    <location>
        <position position="1183"/>
    </location>
    <ligand>
        <name>Mg(2+)</name>
        <dbReference type="ChEBI" id="CHEBI:18420"/>
        <label>2</label>
        <note>catalytic; for RNase H activity</note>
    </ligand>
</feature>
<feature type="binding site" evidence="9">
    <location>
        <position position="1221"/>
    </location>
    <ligand>
        <name>Mg(2+)</name>
        <dbReference type="ChEBI" id="CHEBI:18420"/>
        <label>2</label>
        <note>catalytic; for RNase H activity</note>
    </ligand>
</feature>
<feature type="binding site" evidence="9">
    <location>
        <position position="1242"/>
    </location>
    <ligand>
        <name>Mg(2+)</name>
        <dbReference type="ChEBI" id="CHEBI:18420"/>
        <label>2</label>
        <note>catalytic; for RNase H activity</note>
    </ligand>
</feature>
<feature type="binding site" evidence="9">
    <location>
        <position position="1312"/>
    </location>
    <ligand>
        <name>Mg(2+)</name>
        <dbReference type="ChEBI" id="CHEBI:18420"/>
        <label>2</label>
        <note>catalytic; for RNase H activity</note>
    </ligand>
</feature>
<feature type="binding site" evidence="10">
    <location>
        <position position="1455"/>
    </location>
    <ligand>
        <name>Mg(2+)</name>
        <dbReference type="ChEBI" id="CHEBI:18420"/>
        <label>3</label>
        <note>catalytic; for integrase activity</note>
    </ligand>
</feature>
<feature type="binding site" evidence="10">
    <location>
        <position position="1514"/>
    </location>
    <ligand>
        <name>Mg(2+)</name>
        <dbReference type="ChEBI" id="CHEBI:18420"/>
        <label>3</label>
        <note>catalytic; for integrase activity</note>
    </ligand>
</feature>
<feature type="site" description="Cleavage; by viral protease" evidence="3">
    <location>
        <begin position="131"/>
        <end position="132"/>
    </location>
</feature>
<feature type="site" description="Cleavage; by viral protease" evidence="3">
    <location>
        <begin position="215"/>
        <end position="216"/>
    </location>
</feature>
<feature type="site" description="Cleavage; by viral protease" evidence="3">
    <location>
        <begin position="478"/>
        <end position="479"/>
    </location>
</feature>
<feature type="site" description="Cleavage; by viral protease" evidence="3">
    <location>
        <begin position="534"/>
        <end position="535"/>
    </location>
</feature>
<feature type="site" description="Cleavage; by viral protease" evidence="3">
    <location>
        <begin position="659"/>
        <end position="660"/>
    </location>
</feature>
<feature type="site" description="Cleavage; by viral protease" evidence="3">
    <location>
        <begin position="1330"/>
        <end position="1331"/>
    </location>
</feature>
<feature type="modified residue" description="Phosphoserine; by host" evidence="3">
    <location>
        <position position="192"/>
    </location>
</feature>
<feature type="lipid moiety-binding region" description="N-myristoyl glycine; by host" evidence="5">
    <location>
        <position position="2"/>
    </location>
</feature>
<name>POL_MLVFP</name>
<reference key="1">
    <citation type="journal article" date="1992" name="Nucleic Acids Res.">
        <title>Complete nucleotide sequence of a neuropathogenic variant of Friend murine leukemia virus PVC-211.</title>
        <authorList>
            <person name="Remington M.P."/>
            <person name="Hoffman P.M."/>
            <person name="Ruscetti S.K."/>
            <person name="Masuda M."/>
        </authorList>
    </citation>
    <scope>NUCLEOTIDE SEQUENCE [GENOMIC RNA]</scope>
</reference>
<comment type="function">
    <molecule>Gag-Pol polyprotein</molecule>
    <text evidence="1">Plays a role in budding and is processed by the viral protease during virion maturation outside the cell. During budding, it recruits, in a PPXY-dependent or independent manner, Nedd4-like ubiquitin ligases that conjugate ubiquitin molecules to Gag-Pol, or to Gag-Pol binding host factors. Interaction with HECT ubiquitin ligases probably links the viral protein to the host ESCRT pathway and facilitates release.</text>
</comment>
<comment type="function">
    <molecule>Matrix protein p15</molecule>
    <text evidence="1">Targets Gag and gag-pol polyproteins to the plasma membrane via a multipartite membrane binding signal, that includes its myristoylated N-terminus. Also mediates nuclear localization of the pre-integration complex.</text>
</comment>
<comment type="function">
    <molecule>RNA-binding phosphoprotein p12</molecule>
    <text evidence="3">Constituent of the pre-integration complex (PIC) which tethers the latter to mitotic chromosomes. This allows the integration of the viral genome into the host DNA.</text>
</comment>
<comment type="function">
    <molecule>Capsid protein p30</molecule>
    <text evidence="2">Forms the spherical core of the virion that encapsulates the genomic RNA-nucleocapsid complex.</text>
</comment>
<comment type="function">
    <molecule>Nucleocapsid protein p10-Pol</molecule>
    <text evidence="1 3">Involved in the packaging and encapsidation of two copies of the genome. Binds with high affinity to conserved UCUG elements within the packaging signal, located near the 5'-end of the genome. This binding is dependent on genome dimerization. Acts as a nucleic acid chaperone which is involved in rearrangement of nucleic acid secondary structures during gRNA retrotranscription.</text>
</comment>
<comment type="function">
    <molecule>Protease</molecule>
    <text evidence="1 7">The aspartyl protease mediates proteolytic cleavages of Gag and Gag-Pol polyproteins during or shortly after the release of the virion from the plasma membrane. Cleavages take place as an ordered, step-wise cascade to yield mature proteins. This process is called maturation. Displays maximal activity during the budding process just prior to particle release from the cell (Potential). Cleaves the translation initiation factor eIF4G leading to the inhibition of host cap-dependent translation (By similarity).</text>
</comment>
<comment type="function">
    <molecule>Reverse transcriptase/ribonuclease H</molecule>
    <text evidence="5">RT is a multifunctional enzyme that converts the viral dimeric RNA genome into dsDNA in the cytoplasm, shortly after virus entry into the cell. This enzyme displays a DNA polymerase activity that can copy either DNA or RNA templates, and a ribonuclease H (RNase H) activity that cleaves the RNA strand of RNA-DNA heteroduplexes in a partially processive 3' to 5' endonucleasic mode. Conversion of viral genomic RNA into dsDNA requires many steps. A tRNA binds to the primer-binding site (PBS) situated at the 5' end of the viral RNA. RT uses the 3' end of the tRNA primer to perform a short round of RNA-dependent minus-strand DNA synthesis. The reading proceeds through the U5 region and ends after the repeated (R) region which is present at both ends of viral RNA. The portion of the RNA-DNA heteroduplex is digested by the RNase H, resulting in a ssDNA product attached to the tRNA primer. This ssDNA/tRNA hybridizes with the identical R region situated at the 3' end of viral RNA. This template exchange, known as minus-strand DNA strong stop transfer, can be either intra- or intermolecular. RT uses the 3' end of this newly synthesized short ssDNA to perform the RNA-dependent minus-strand DNA synthesis of the whole template. RNase H digests the RNA template except for a polypurine tract (PPT) situated at the 5' end of the genome. It is not clear if both polymerase and RNase H activities are simultaneous. RNase H probably can proceed both in a polymerase-dependent (RNA cut into small fragments by the same RT performing DNA synthesis) and a polymerase-independent mode (cleavage of remaining RNA fragments by free RTs). Secondly, RT performs DNA-directed plus-strand DNA synthesis using the PPT that has not been removed by RNase H as primers. PPT and tRNA primers are then removed by RNase H. The 3' and 5' ssDNA PBS regions hybridize to form a circular dsDNA intermediate. Strand displacement synthesis by RT to the PBS and PPT ends produces a blunt ended, linear dsDNA copy of the viral genome that includes long terminal repeats (LTRs) at both ends.</text>
</comment>
<comment type="function">
    <molecule>Integrase</molecule>
    <text evidence="3">Catalyzes viral DNA integration into the host chromosome, by performing a series of DNA cutting and joining reactions. This enzyme activity takes place after virion entry into a cell and reverse transcription of the RNA genome in dsDNA. The first step in the integration process is 3' processing. This step requires a complex comprising the viral genome, matrix protein and integrase. This complex is called the pre-integration complex (PIC). The integrase protein removes 2 nucleotides from each 3' end of the viral DNA, leaving recessed CA OH's at the 3' ends. In the second step that requires cell division, the PIC enters cell nucleus. In the third step, termed strand transfer, the integrase protein joins the previously processed 3' ends to the 5' ends of strands of target cellular DNA at the site of integration. The last step is viral DNA integration into host chromosome.</text>
</comment>
<comment type="catalytic activity">
    <reaction evidence="8">
        <text>DNA(n) + a 2'-deoxyribonucleoside 5'-triphosphate = DNA(n+1) + diphosphate</text>
        <dbReference type="Rhea" id="RHEA:22508"/>
        <dbReference type="Rhea" id="RHEA-COMP:17339"/>
        <dbReference type="Rhea" id="RHEA-COMP:17340"/>
        <dbReference type="ChEBI" id="CHEBI:33019"/>
        <dbReference type="ChEBI" id="CHEBI:61560"/>
        <dbReference type="ChEBI" id="CHEBI:173112"/>
        <dbReference type="EC" id="2.7.7.49"/>
    </reaction>
</comment>
<comment type="catalytic activity">
    <reaction evidence="8">
        <text>DNA(n) + a 2'-deoxyribonucleoside 5'-triphosphate = DNA(n+1) + diphosphate</text>
        <dbReference type="Rhea" id="RHEA:22508"/>
        <dbReference type="Rhea" id="RHEA-COMP:17339"/>
        <dbReference type="Rhea" id="RHEA-COMP:17340"/>
        <dbReference type="ChEBI" id="CHEBI:33019"/>
        <dbReference type="ChEBI" id="CHEBI:61560"/>
        <dbReference type="ChEBI" id="CHEBI:173112"/>
        <dbReference type="EC" id="2.7.7.7"/>
    </reaction>
</comment>
<comment type="catalytic activity">
    <reaction evidence="9">
        <text>Endonucleolytic cleavage to 5'-phosphomonoester.</text>
        <dbReference type="EC" id="3.1.26.4"/>
    </reaction>
</comment>
<comment type="cofactor">
    <cofactor evidence="8">
        <name>Mg(2+)</name>
        <dbReference type="ChEBI" id="CHEBI:18420"/>
    </cofactor>
    <text evidence="8">The RT polymerase active site binds 2 magnesium ions.</text>
</comment>
<comment type="cofactor">
    <cofactor evidence="3">
        <name>Mg(2+)</name>
        <dbReference type="ChEBI" id="CHEBI:18420"/>
    </cofactor>
    <text evidence="3">Binds 1 magnesium ion for ribonuclease H (RNase H) activity.</text>
</comment>
<comment type="cofactor">
    <cofactor evidence="3">
        <name>Mg(2+)</name>
        <dbReference type="ChEBI" id="CHEBI:18420"/>
    </cofactor>
    <text evidence="3">Magnesium ions are required for integrase activity. Binds at least 1, maybe 2 magnesium ions.</text>
</comment>
<comment type="activity regulation">
    <molecule>Protease</molecule>
    <text evidence="3">Most efficiently inhibited by Amprenavir, which is able to block Gag-Pol processing in infected cells.</text>
</comment>
<comment type="subunit">
    <molecule>Capsid protein p30</molecule>
    <text evidence="3">Homohexamer; further associates as homomultimer (By similarity). The virus core is composed of a lattice formed from hexagonal rings, each containing six capsid monomers (By similarity). Interacts with mouse UBE2I and mouse PIAS4 (By similarity).</text>
</comment>
<comment type="subunit">
    <molecule>Gag-Pol polyprotein</molecule>
    <text evidence="3">Interacts (via PPXY motif) with host NEDD4 (By similarity). Interacts (via PSAP motif) with host TSG101 (By similarity). Interacts (via LYPX(n)L motif) with host PDCD6IP (By similarity).</text>
</comment>
<comment type="subunit">
    <molecule>Reverse transcriptase/ribonuclease H</molecule>
    <text evidence="3 12">The reverse transcriptase is a monomer (Potential). Interacts (via RNase domains) with host release factor ETF1; this interaction is essential for translational readthrough of amber codon between viral gag and pol genes, as well as for viral replication (By similarity).</text>
</comment>
<comment type="subunit">
    <molecule>Integrase</molecule>
    <text evidence="3">Homodimer (By similarity).</text>
</comment>
<comment type="subcellular location">
    <molecule>Gag-Pol polyprotein</molecule>
    <subcellularLocation>
        <location evidence="1">Virion</location>
    </subcellularLocation>
    <subcellularLocation>
        <location evidence="1">Host cell membrane</location>
        <topology evidence="1">Lipid-anchor</topology>
    </subcellularLocation>
    <subcellularLocation>
        <location evidence="1">Host late endosome membrane</location>
        <topology evidence="1">Lipid-anchor</topology>
    </subcellularLocation>
    <subcellularLocation>
        <location evidence="4">Host endosome</location>
        <location evidence="4">Host multivesicular body</location>
    </subcellularLocation>
    <text evidence="3">These locations are probably linked to virus assembly sites.</text>
</comment>
<comment type="subcellular location">
    <molecule>Matrix protein p15</molecule>
    <subcellularLocation>
        <location evidence="3">Virion</location>
    </subcellularLocation>
</comment>
<comment type="subcellular location">
    <molecule>Capsid protein p30</molecule>
    <subcellularLocation>
        <location evidence="3">Virion</location>
    </subcellularLocation>
</comment>
<comment type="subcellular location">
    <molecule>Nucleocapsid protein p10-Pol</molecule>
    <subcellularLocation>
        <location evidence="3">Virion</location>
    </subcellularLocation>
</comment>
<comment type="subcellular location">
    <molecule>Protease</molecule>
    <subcellularLocation>
        <location evidence="3">Virion</location>
    </subcellularLocation>
</comment>
<comment type="subcellular location">
    <molecule>RNA-binding phosphoprotein p12</molecule>
    <subcellularLocation>
        <location evidence="3">Host cytoplasm</location>
    </subcellularLocation>
    <text evidence="3">Localizes to the host cytoplasm early in infection and binds to the mitotic chromosomes later on.</text>
</comment>
<comment type="domain">
    <molecule>Gag-Pol polyprotein</molecule>
    <text evidence="1">Late-budding domains (L domains) are short sequence motifs essential for viral particle release. They can occur individually or in close proximity within structural proteins. They interacts with sorting cellular proteins of the multivesicular body (MVB) pathway. Most of these proteins are class E vacuolar protein sorting factors belonging to ESCRT-I, ESCRT-II or ESCRT-III complexes. RNA-binding phosphoprotein p12 contains one L domain: a PPXY motif which potentially interacts with the WW domain 3 of NEDD4 E3 ubiquitin ligase. PPXY motif is essential for virus egress. Matrix protein p15 contains one L domain: a PTAP/PSAP motif, which potentially interacts with the UEV domain of TSG101. The junction between the matrix protein p15 and RNA-binding phosphoprotein p12 also contains one L domain: a LYPX(n)L motif which potentially interacts with PDCD6IP. Both PSAP and LYPX(n)L domains might play little to no role in budding and possibly drive residual virus release. contains.</text>
</comment>
<comment type="PTM">
    <molecule>Gag-Pol polyprotein</molecule>
    <text evidence="1">Ubiquitinated by ITCH. Gag can recruit the ubiquitin ligase Itch in an L domain-independent manner to facilitate virus release via a mechanism that involves Gag ubiquitination.</text>
</comment>
<comment type="PTM">
    <molecule>Gag-Pol polyprotein</molecule>
    <text evidence="3">Specific enzymatic cleavages by the viral protease yield mature proteins. The protease is released by autocatalytic cleavage. The polyprotein is cleaved during and after budding, this process is termed maturation.</text>
</comment>
<comment type="PTM">
    <molecule>Capsid protein p30</molecule>
    <text evidence="3">Sumoylated; which is required for virus replication.</text>
</comment>
<comment type="PTM">
    <molecule>RNA-binding phosphoprotein p12</molecule>
    <text evidence="3">Phosphorylated on serine residues.</text>
</comment>
<comment type="miscellaneous">
    <molecule>Gag-Pol polyprotein</molecule>
    <text evidence="3">This protein is translated as a gag-pol fusion protein by episodic readthrough of the gag protein termination codon. Readthrough of the terminator codon TAG occurs between the codons for 538-Asp and 540-Gly.</text>
</comment>
<comment type="miscellaneous">
    <molecule>Nucleocapsid protein p10-Pol</molecule>
    <text evidence="3">Nucleocapsid protein p10-Pol released from Pol polyprotein (NC-pol) is a few amino acids shorter than the nucleocapsid protein p10 released from Gag polyprotein (NC-gag).</text>
</comment>
<comment type="miscellaneous">
    <molecule>Reverse transcriptase/ribonuclease H</molecule>
    <text evidence="8">The reverse transcriptase is an error-prone enzyme that lacks a proof-reading function. High mutations rate is a direct consequence of this characteristic. RT also displays frequent template switching leading to high recombination rate. Recombination mostly occurs between homologous regions of the two copackaged RNA genomes. If these two RNA molecules derive from different viral strains, reverse transcription will give rise to highly recombinated proviral DNAs.</text>
</comment>
<comment type="similarity">
    <text evidence="12">Belongs to the retroviral Pol polyprotein family.</text>
</comment>
<keyword id="KW-0064">Aspartyl protease</keyword>
<keyword id="KW-0167">Capsid protein</keyword>
<keyword id="KW-0175">Coiled coil</keyword>
<keyword id="KW-0229">DNA integration</keyword>
<keyword id="KW-0233">DNA recombination</keyword>
<keyword id="KW-0238">DNA-binding</keyword>
<keyword id="KW-0239">DNA-directed DNA polymerase</keyword>
<keyword id="KW-0255">Endonuclease</keyword>
<keyword id="KW-1262">Eukaryotic host gene expression shutoff by virus</keyword>
<keyword id="KW-1193">Eukaryotic host translation shutoff by virus</keyword>
<keyword id="KW-1032">Host cell membrane</keyword>
<keyword id="KW-1035">Host cytoplasm</keyword>
<keyword id="KW-1039">Host endosome</keyword>
<keyword id="KW-1190">Host gene expression shutoff by virus</keyword>
<keyword id="KW-1043">Host membrane</keyword>
<keyword id="KW-0945">Host-virus interaction</keyword>
<keyword id="KW-0378">Hydrolase</keyword>
<keyword id="KW-0449">Lipoprotein</keyword>
<keyword id="KW-0460">Magnesium</keyword>
<keyword id="KW-0472">Membrane</keyword>
<keyword id="KW-0479">Metal-binding</keyword>
<keyword id="KW-0511">Multifunctional enzyme</keyword>
<keyword id="KW-0519">Myristate</keyword>
<keyword id="KW-0540">Nuclease</keyword>
<keyword id="KW-0548">Nucleotidyltransferase</keyword>
<keyword id="KW-0597">Phosphoprotein</keyword>
<keyword id="KW-0645">Protease</keyword>
<keyword id="KW-1159">RNA suppression of termination</keyword>
<keyword id="KW-0694">RNA-binding</keyword>
<keyword id="KW-0695">RNA-directed DNA polymerase</keyword>
<keyword id="KW-0808">Transferase</keyword>
<keyword id="KW-0832">Ubl conjugation</keyword>
<keyword id="KW-1179">Viral genome integration</keyword>
<keyword id="KW-0468">Viral matrix protein</keyword>
<keyword id="KW-0543">Viral nucleoprotein</keyword>
<keyword id="KW-0946">Virion</keyword>
<keyword id="KW-1160">Virus entry into host cell</keyword>
<keyword id="KW-0862">Zinc</keyword>
<keyword id="KW-0863">Zinc-finger</keyword>
<evidence type="ECO:0000250" key="1">
    <source>
        <dbReference type="UniProtKB" id="P03332"/>
    </source>
</evidence>
<evidence type="ECO:0000250" key="2">
    <source>
        <dbReference type="UniProtKB" id="P03336"/>
    </source>
</evidence>
<evidence type="ECO:0000250" key="3">
    <source>
        <dbReference type="UniProtKB" id="P03355"/>
    </source>
</evidence>
<evidence type="ECO:0000250" key="4">
    <source>
        <dbReference type="UniProtKB" id="P26807"/>
    </source>
</evidence>
<evidence type="ECO:0000255" key="5"/>
<evidence type="ECO:0000255" key="6">
    <source>
        <dbReference type="PROSITE-ProRule" id="PRU00047"/>
    </source>
</evidence>
<evidence type="ECO:0000255" key="7">
    <source>
        <dbReference type="PROSITE-ProRule" id="PRU00275"/>
    </source>
</evidence>
<evidence type="ECO:0000255" key="8">
    <source>
        <dbReference type="PROSITE-ProRule" id="PRU00405"/>
    </source>
</evidence>
<evidence type="ECO:0000255" key="9">
    <source>
        <dbReference type="PROSITE-ProRule" id="PRU00408"/>
    </source>
</evidence>
<evidence type="ECO:0000255" key="10">
    <source>
        <dbReference type="PROSITE-ProRule" id="PRU00457"/>
    </source>
</evidence>
<evidence type="ECO:0000256" key="11">
    <source>
        <dbReference type="SAM" id="MobiDB-lite"/>
    </source>
</evidence>
<evidence type="ECO:0000305" key="12"/>
<dbReference type="EC" id="3.4.23.-" evidence="7"/>
<dbReference type="EC" id="2.7.7.49" evidence="8"/>
<dbReference type="EC" id="2.7.7.7" evidence="8"/>
<dbReference type="EC" id="3.1.26.4" evidence="9"/>
<dbReference type="EC" id="2.7.7.-" evidence="3"/>
<dbReference type="EC" id="3.1.-.-" evidence="3"/>
<dbReference type="EMBL" id="M93134">
    <property type="protein sequence ID" value="AAA46477.1"/>
    <property type="molecule type" value="Genomic_RNA"/>
</dbReference>
<dbReference type="PIR" id="S35475">
    <property type="entry name" value="S35475"/>
</dbReference>
<dbReference type="SMR" id="P26808"/>
<dbReference type="Proteomes" id="UP000007777">
    <property type="component" value="Genome"/>
</dbReference>
<dbReference type="GO" id="GO:0044185">
    <property type="term" value="C:host cell late endosome membrane"/>
    <property type="evidence" value="ECO:0007669"/>
    <property type="project" value="UniProtKB-SubCell"/>
</dbReference>
<dbReference type="GO" id="GO:0020002">
    <property type="term" value="C:host cell plasma membrane"/>
    <property type="evidence" value="ECO:0007669"/>
    <property type="project" value="UniProtKB-SubCell"/>
</dbReference>
<dbReference type="GO" id="GO:0072494">
    <property type="term" value="C:host multivesicular body"/>
    <property type="evidence" value="ECO:0007669"/>
    <property type="project" value="UniProtKB-SubCell"/>
</dbReference>
<dbReference type="GO" id="GO:0016020">
    <property type="term" value="C:membrane"/>
    <property type="evidence" value="ECO:0007669"/>
    <property type="project" value="UniProtKB-KW"/>
</dbReference>
<dbReference type="GO" id="GO:0019013">
    <property type="term" value="C:viral nucleocapsid"/>
    <property type="evidence" value="ECO:0007669"/>
    <property type="project" value="UniProtKB-KW"/>
</dbReference>
<dbReference type="GO" id="GO:0004190">
    <property type="term" value="F:aspartic-type endopeptidase activity"/>
    <property type="evidence" value="ECO:0007669"/>
    <property type="project" value="UniProtKB-KW"/>
</dbReference>
<dbReference type="GO" id="GO:0003677">
    <property type="term" value="F:DNA binding"/>
    <property type="evidence" value="ECO:0007669"/>
    <property type="project" value="UniProtKB-KW"/>
</dbReference>
<dbReference type="GO" id="GO:0003887">
    <property type="term" value="F:DNA-directed DNA polymerase activity"/>
    <property type="evidence" value="ECO:0007669"/>
    <property type="project" value="UniProtKB-KW"/>
</dbReference>
<dbReference type="GO" id="GO:0003723">
    <property type="term" value="F:RNA binding"/>
    <property type="evidence" value="ECO:0007669"/>
    <property type="project" value="UniProtKB-KW"/>
</dbReference>
<dbReference type="GO" id="GO:0003964">
    <property type="term" value="F:RNA-directed DNA polymerase activity"/>
    <property type="evidence" value="ECO:0007669"/>
    <property type="project" value="UniProtKB-KW"/>
</dbReference>
<dbReference type="GO" id="GO:0004523">
    <property type="term" value="F:RNA-DNA hybrid ribonuclease activity"/>
    <property type="evidence" value="ECO:0007669"/>
    <property type="project" value="UniProtKB-EC"/>
</dbReference>
<dbReference type="GO" id="GO:0039660">
    <property type="term" value="F:structural constituent of virion"/>
    <property type="evidence" value="ECO:0007669"/>
    <property type="project" value="UniProtKB-KW"/>
</dbReference>
<dbReference type="GO" id="GO:0008270">
    <property type="term" value="F:zinc ion binding"/>
    <property type="evidence" value="ECO:0007669"/>
    <property type="project" value="UniProtKB-KW"/>
</dbReference>
<dbReference type="GO" id="GO:0015074">
    <property type="term" value="P:DNA integration"/>
    <property type="evidence" value="ECO:0007669"/>
    <property type="project" value="UniProtKB-KW"/>
</dbReference>
<dbReference type="GO" id="GO:0006310">
    <property type="term" value="P:DNA recombination"/>
    <property type="evidence" value="ECO:0007669"/>
    <property type="project" value="UniProtKB-KW"/>
</dbReference>
<dbReference type="GO" id="GO:0075713">
    <property type="term" value="P:establishment of integrated proviral latency"/>
    <property type="evidence" value="ECO:0007669"/>
    <property type="project" value="UniProtKB-KW"/>
</dbReference>
<dbReference type="GO" id="GO:0006508">
    <property type="term" value="P:proteolysis"/>
    <property type="evidence" value="ECO:0007669"/>
    <property type="project" value="UniProtKB-KW"/>
</dbReference>
<dbReference type="GO" id="GO:0046718">
    <property type="term" value="P:symbiont entry into host cell"/>
    <property type="evidence" value="ECO:0007669"/>
    <property type="project" value="UniProtKB-KW"/>
</dbReference>
<dbReference type="GO" id="GO:0039657">
    <property type="term" value="P:symbiont-mediated suppression of host gene expression"/>
    <property type="evidence" value="ECO:0007669"/>
    <property type="project" value="UniProtKB-KW"/>
</dbReference>
<dbReference type="GO" id="GO:0044826">
    <property type="term" value="P:viral genome integration into host DNA"/>
    <property type="evidence" value="ECO:0007669"/>
    <property type="project" value="UniProtKB-KW"/>
</dbReference>
<dbReference type="GO" id="GO:0019068">
    <property type="term" value="P:virion assembly"/>
    <property type="evidence" value="ECO:0007669"/>
    <property type="project" value="InterPro"/>
</dbReference>
<dbReference type="CDD" id="cd09273">
    <property type="entry name" value="RNase_HI_RT_Bel"/>
    <property type="match status" value="1"/>
</dbReference>
<dbReference type="CDD" id="cd06095">
    <property type="entry name" value="RP_RTVL_H_like"/>
    <property type="match status" value="1"/>
</dbReference>
<dbReference type="CDD" id="cd03715">
    <property type="entry name" value="RT_ZFREV_like"/>
    <property type="match status" value="1"/>
</dbReference>
<dbReference type="FunFam" id="2.40.70.10:FF:000087">
    <property type="entry name" value="Gag-Pol polyprotein"/>
    <property type="match status" value="1"/>
</dbReference>
<dbReference type="FunFam" id="3.30.420.10:FF:000094">
    <property type="entry name" value="Gag-Pol polyprotein"/>
    <property type="match status" value="1"/>
</dbReference>
<dbReference type="FunFam" id="3.30.420.10:FF:000102">
    <property type="entry name" value="Gag-Pol polyprotein"/>
    <property type="match status" value="1"/>
</dbReference>
<dbReference type="FunFam" id="3.30.70.270:FF:000020">
    <property type="entry name" value="Transposon Tf2-6 polyprotein-like Protein"/>
    <property type="match status" value="1"/>
</dbReference>
<dbReference type="Gene3D" id="1.10.340.70">
    <property type="match status" value="1"/>
</dbReference>
<dbReference type="Gene3D" id="2.30.30.850">
    <property type="match status" value="1"/>
</dbReference>
<dbReference type="Gene3D" id="3.10.20.370">
    <property type="match status" value="1"/>
</dbReference>
<dbReference type="Gene3D" id="3.30.70.270">
    <property type="match status" value="2"/>
</dbReference>
<dbReference type="Gene3D" id="2.40.70.10">
    <property type="entry name" value="Acid Proteases"/>
    <property type="match status" value="1"/>
</dbReference>
<dbReference type="Gene3D" id="1.10.150.180">
    <property type="entry name" value="Gamma-retroviral matrix domain"/>
    <property type="match status" value="1"/>
</dbReference>
<dbReference type="Gene3D" id="3.10.10.10">
    <property type="entry name" value="HIV Type 1 Reverse Transcriptase, subunit A, domain 1"/>
    <property type="match status" value="1"/>
</dbReference>
<dbReference type="Gene3D" id="1.10.375.10">
    <property type="entry name" value="Human Immunodeficiency Virus Type 1 Capsid Protein"/>
    <property type="match status" value="1"/>
</dbReference>
<dbReference type="Gene3D" id="3.30.420.10">
    <property type="entry name" value="Ribonuclease H-like superfamily/Ribonuclease H"/>
    <property type="match status" value="2"/>
</dbReference>
<dbReference type="Gene3D" id="4.10.60.10">
    <property type="entry name" value="Zinc finger, CCHC-type"/>
    <property type="match status" value="1"/>
</dbReference>
<dbReference type="InterPro" id="IPR001969">
    <property type="entry name" value="Aspartic_peptidase_AS"/>
</dbReference>
<dbReference type="InterPro" id="IPR043502">
    <property type="entry name" value="DNA/RNA_pol_sf"/>
</dbReference>
<dbReference type="InterPro" id="IPR000840">
    <property type="entry name" value="G_retro_matrix"/>
</dbReference>
<dbReference type="InterPro" id="IPR036946">
    <property type="entry name" value="G_retro_matrix_sf"/>
</dbReference>
<dbReference type="InterPro" id="IPR039464">
    <property type="entry name" value="Gag-pol_Znf-H3C2"/>
</dbReference>
<dbReference type="InterPro" id="IPR002079">
    <property type="entry name" value="Gag_p12"/>
</dbReference>
<dbReference type="InterPro" id="IPR003036">
    <property type="entry name" value="Gag_P30"/>
</dbReference>
<dbReference type="InterPro" id="IPR001584">
    <property type="entry name" value="Integrase_cat-core"/>
</dbReference>
<dbReference type="InterPro" id="IPR040643">
    <property type="entry name" value="MLVIN_C"/>
</dbReference>
<dbReference type="InterPro" id="IPR001995">
    <property type="entry name" value="Peptidase_A2_cat"/>
</dbReference>
<dbReference type="InterPro" id="IPR021109">
    <property type="entry name" value="Peptidase_aspartic_dom_sf"/>
</dbReference>
<dbReference type="InterPro" id="IPR018061">
    <property type="entry name" value="Retropepsins"/>
</dbReference>
<dbReference type="InterPro" id="IPR008919">
    <property type="entry name" value="Retrov_capsid_N"/>
</dbReference>
<dbReference type="InterPro" id="IPR050462">
    <property type="entry name" value="Retroviral_Gag-Pol_poly"/>
</dbReference>
<dbReference type="InterPro" id="IPR010999">
    <property type="entry name" value="Retrovr_matrix"/>
</dbReference>
<dbReference type="InterPro" id="IPR043128">
    <property type="entry name" value="Rev_trsase/Diguanyl_cyclase"/>
</dbReference>
<dbReference type="InterPro" id="IPR012337">
    <property type="entry name" value="RNaseH-like_sf"/>
</dbReference>
<dbReference type="InterPro" id="IPR002156">
    <property type="entry name" value="RNaseH_domain"/>
</dbReference>
<dbReference type="InterPro" id="IPR036397">
    <property type="entry name" value="RNaseH_sf"/>
</dbReference>
<dbReference type="InterPro" id="IPR000477">
    <property type="entry name" value="RT_dom"/>
</dbReference>
<dbReference type="InterPro" id="IPR041577">
    <property type="entry name" value="RT_RNaseH_2"/>
</dbReference>
<dbReference type="InterPro" id="IPR001878">
    <property type="entry name" value="Znf_CCHC"/>
</dbReference>
<dbReference type="InterPro" id="IPR036875">
    <property type="entry name" value="Znf_CCHC_sf"/>
</dbReference>
<dbReference type="PANTHER" id="PTHR33166">
    <property type="entry name" value="GAG_P30 DOMAIN-CONTAINING PROTEIN"/>
    <property type="match status" value="1"/>
</dbReference>
<dbReference type="Pfam" id="PF01140">
    <property type="entry name" value="Gag_MA"/>
    <property type="match status" value="1"/>
</dbReference>
<dbReference type="Pfam" id="PF01141">
    <property type="entry name" value="Gag_p12"/>
    <property type="match status" value="1"/>
</dbReference>
<dbReference type="Pfam" id="PF02093">
    <property type="entry name" value="Gag_p30"/>
    <property type="match status" value="1"/>
</dbReference>
<dbReference type="Pfam" id="PF18697">
    <property type="entry name" value="MLVIN_C"/>
    <property type="match status" value="1"/>
</dbReference>
<dbReference type="Pfam" id="PF00075">
    <property type="entry name" value="RNase_H"/>
    <property type="match status" value="1"/>
</dbReference>
<dbReference type="Pfam" id="PF17919">
    <property type="entry name" value="RT_RNaseH_2"/>
    <property type="match status" value="1"/>
</dbReference>
<dbReference type="Pfam" id="PF00665">
    <property type="entry name" value="rve"/>
    <property type="match status" value="1"/>
</dbReference>
<dbReference type="Pfam" id="PF00077">
    <property type="entry name" value="RVP"/>
    <property type="match status" value="1"/>
</dbReference>
<dbReference type="Pfam" id="PF00078">
    <property type="entry name" value="RVT_1"/>
    <property type="match status" value="1"/>
</dbReference>
<dbReference type="Pfam" id="PF00098">
    <property type="entry name" value="zf-CCHC"/>
    <property type="match status" value="1"/>
</dbReference>
<dbReference type="Pfam" id="PF16721">
    <property type="entry name" value="zf-H3C2"/>
    <property type="match status" value="1"/>
</dbReference>
<dbReference type="SMART" id="SM00343">
    <property type="entry name" value="ZnF_C2HC"/>
    <property type="match status" value="1"/>
</dbReference>
<dbReference type="SUPFAM" id="SSF50630">
    <property type="entry name" value="Acid proteases"/>
    <property type="match status" value="1"/>
</dbReference>
<dbReference type="SUPFAM" id="SSF56672">
    <property type="entry name" value="DNA/RNA polymerases"/>
    <property type="match status" value="1"/>
</dbReference>
<dbReference type="SUPFAM" id="SSF47836">
    <property type="entry name" value="Retroviral matrix proteins"/>
    <property type="match status" value="1"/>
</dbReference>
<dbReference type="SUPFAM" id="SSF47943">
    <property type="entry name" value="Retrovirus capsid protein, N-terminal core domain"/>
    <property type="match status" value="1"/>
</dbReference>
<dbReference type="SUPFAM" id="SSF57756">
    <property type="entry name" value="Retrovirus zinc finger-like domains"/>
    <property type="match status" value="1"/>
</dbReference>
<dbReference type="SUPFAM" id="SSF53098">
    <property type="entry name" value="Ribonuclease H-like"/>
    <property type="match status" value="2"/>
</dbReference>
<dbReference type="PROSITE" id="PS50175">
    <property type="entry name" value="ASP_PROT_RETROV"/>
    <property type="match status" value="1"/>
</dbReference>
<dbReference type="PROSITE" id="PS00141">
    <property type="entry name" value="ASP_PROTEASE"/>
    <property type="match status" value="1"/>
</dbReference>
<dbReference type="PROSITE" id="PS50994">
    <property type="entry name" value="INTEGRASE"/>
    <property type="match status" value="1"/>
</dbReference>
<dbReference type="PROSITE" id="PS50879">
    <property type="entry name" value="RNASE_H_1"/>
    <property type="match status" value="1"/>
</dbReference>
<dbReference type="PROSITE" id="PS50878">
    <property type="entry name" value="RT_POL"/>
    <property type="match status" value="1"/>
</dbReference>
<dbReference type="PROSITE" id="PS50158">
    <property type="entry name" value="ZF_CCHC"/>
    <property type="match status" value="1"/>
</dbReference>
<accession>P26808</accession>
<organismHost>
    <name type="scientific">Mus musculus</name>
    <name type="common">Mouse</name>
    <dbReference type="NCBI Taxonomy" id="10090"/>
</organismHost>
<proteinExistence type="inferred from homology"/>
<sequence length="1738" mass="195265">MGQTATTPLSLTLDHWKDVERTAHNQSVEVRKRRWVTFCSAEWPTFNVGWPRDGTFNPDIITQVKIKVFSPGPHGHPDQVPYIVTWEALAVDPPPWVKPFVHPKPPLLLPPSAPSLPPEPPLSTPPQSSLYPALTSPLNTKPRPQVLPDSGGPLIDLLTEDPPPYRDPGPPSPDGKGDSGEVAPTEGAPDSSPMVSRLRGRREPPVADSTTSQAFPLRLGGNGQFQYWPFSSSDLYNWKNNNPSFSEDPGKLTALIESVLLTHQPTWDDCQQLLGTLLTGEEKQRVLLEARKAVRGEDGRPTQLPNDINDAFPLERPDWDYNTQRGRNHLVHYRQLLLAGLQNAGRSPTNLAKVKGITQGPNESPSAFLERLKEAYRRYTPYDPEDPGQETNVSMSFIWQSAPDIGRKLERLEDLKNKTLGDLVREAEKIFNKRETPEEREERVRRETEEKEERRRAEDERREKERDRRRHREMSKLLATVVSGQRQDRQGGERRRPQLDHDQCAYCKEKGHWARDCPKKPRGPRGPRPQASLLTLDDQGGQGQEPPPEPRITLKVGGQPVTFLVDTGAQHSVLTQNPGPLSDKSAWVQGATGGKRYRWTTDRRVHLATGKVTHSFLHVPDCPYPLLGRDLLTKLKAQIHFEGSGAQVVGPMGQPLQVLTLNIEDEYRLHETSKGPDVPLGSTWLSDFPQAWAETGGMGLAVRQAPLIIPLRAASTPVSIKQYPMSREARLGIKPHIQRLLDQGILVPCQSPWNTPLLPVKKPGTNDYRPVQDLREVNKRVEDIHPTVPNPYNLLSGLPPSHQWYTVLDLKDAFFCLRLHPTSQSLFAFEWRDPEMGISGQLTWTRLPQGFKNSPTLFDEALHRDLADFRIQHPDLILLQYVDDLLLAATSELDCQQGTRALLQTLGDLGYRASAKKAQICQKQVKYLGYLLKEGQRWLTEARKETVMGQPTPKTPRQLREFLGTAGFCRLWIPGFAEMAAPLYPLTKTGTLFKWGPDQQKAYQEIKQALLTAPALGLPDLTKPFELFVDEKQGYAKGVLTQKLGPWRRPVAYLSKKLDPVAAGWPPCLRMVAAIAVLTKDAGKLTMGQPLVILAPHAVEALVKQPPDRWLSNARMTHYQALLLDTDRVQFGPIVTLNPATLLPLPEEGLQHDCLDILAEAHGTRPDLTDQPLPDADHTWYTDGSSFLQEGQRKAGAAVTTETEVIWAKALPAGTSAQRAELIALTQALKMAEGKKLNVYTDSRYAFATAHIHGEIYRRRGLLTSEGKEIKNKEEILALLKALFLPKRLSIIHCPGHQKGNRAEARGNRMADQAAREVATRETPETSTLLIENSAPYTREHFHYTVTDIKDLTKLGATYDNAQKCWVYQGKPVMPDQFTFELLDFLHQLTHLSFSKTKALLERSYSPYYMLNRDRTLKDITETCKACAQVNASKSAVKQGTRVRGHRPGTHWEIDFTEVKPGLYGYKYLLVFVDTFSGWVEAFPTKKETAKVVTKKLLEEIFPRFGMPQVLGTDNGPAFVSKVSQTVADLLGVDWKLHCAYRPQSSGQVERMNRTIKETLTKLTLATGSRDWVLLLPLALYRARNTPGPHGLTPYEILYGAPPPLVNFPDPDMAKVTHNPSLQAHLQALYLVQHEVWRPLAAAYQEQLDRPVVPHPFRVGDTVWVRRHQTKNLEPRWKGPYTVLLTTPTALKVDGIAAWIHAAHVKAADTKIEPPSESTWRVQRSQNPLKIRLTRGTS</sequence>
<protein>
    <recommendedName>
        <fullName>Gag-Pol polyprotein</fullName>
    </recommendedName>
    <component>
        <recommendedName>
            <fullName>Matrix protein p15</fullName>
        </recommendedName>
    </component>
    <component>
        <recommendedName>
            <fullName>RNA-binding phosphoprotein p12</fullName>
        </recommendedName>
        <alternativeName>
            <fullName>pp12</fullName>
        </alternativeName>
    </component>
    <component>
        <recommendedName>
            <fullName>Capsid protein p30</fullName>
        </recommendedName>
    </component>
    <component>
        <recommendedName>
            <fullName>Nucleocapsid protein p10-Pol</fullName>
            <shortName>NC-pol</shortName>
        </recommendedName>
    </component>
    <component>
        <recommendedName>
            <fullName>Protease</fullName>
            <ecNumber evidence="7">3.4.23.-</ecNumber>
        </recommendedName>
    </component>
    <component>
        <recommendedName>
            <fullName>Reverse transcriptase/ribonuclease H</fullName>
            <shortName>RT</shortName>
            <ecNumber evidence="8">2.7.7.49</ecNumber>
            <ecNumber evidence="8">2.7.7.7</ecNumber>
            <ecNumber evidence="9">3.1.26.4</ecNumber>
        </recommendedName>
    </component>
    <component>
        <recommendedName>
            <fullName>Integrase</fullName>
            <shortName>IN</shortName>
            <ecNumber evidence="3">2.7.7.-</ecNumber>
            <ecNumber evidence="3">3.1.-.-</ecNumber>
        </recommendedName>
    </component>
</protein>
<gene>
    <name type="primary">pol</name>
</gene>